<keyword id="KW-0963">Cytoplasm</keyword>
<keyword id="KW-0342">GTP-binding</keyword>
<keyword id="KW-0378">Hydrolase</keyword>
<keyword id="KW-0460">Magnesium</keyword>
<keyword id="KW-0479">Metal-binding</keyword>
<keyword id="KW-0547">Nucleotide-binding</keyword>
<keyword id="KW-1185">Reference proteome</keyword>
<comment type="function">
    <text evidence="1">An essential GTPase which binds GTP, GDP and possibly (p)ppGpp with moderate affinity, with high nucleotide exchange rates and a fairly low GTP hydrolysis rate. Plays a role in control of the cell cycle, stress response, ribosome biogenesis and in those bacteria that undergo differentiation, in morphogenesis control.</text>
</comment>
<comment type="cofactor">
    <cofactor evidence="1">
        <name>Mg(2+)</name>
        <dbReference type="ChEBI" id="CHEBI:18420"/>
    </cofactor>
</comment>
<comment type="subunit">
    <text evidence="1">Monomer.</text>
</comment>
<comment type="subcellular location">
    <subcellularLocation>
        <location evidence="1">Cytoplasm</location>
    </subcellularLocation>
</comment>
<comment type="similarity">
    <text evidence="1">Belongs to the TRAFAC class OBG-HflX-like GTPase superfamily. OBG GTPase family.</text>
</comment>
<proteinExistence type="inferred from homology"/>
<name>OBG_MYXXD</name>
<gene>
    <name evidence="1" type="primary">obg</name>
    <name type="ordered locus">MXAN_1471</name>
</gene>
<protein>
    <recommendedName>
        <fullName evidence="1">GTPase Obg</fullName>
        <ecNumber evidence="1">3.6.5.-</ecNumber>
    </recommendedName>
    <alternativeName>
        <fullName evidence="1">GTP-binding protein Obg</fullName>
    </alternativeName>
</protein>
<accession>Q1DC95</accession>
<organism>
    <name type="scientific">Myxococcus xanthus (strain DK1622)</name>
    <dbReference type="NCBI Taxonomy" id="246197"/>
    <lineage>
        <taxon>Bacteria</taxon>
        <taxon>Pseudomonadati</taxon>
        <taxon>Myxococcota</taxon>
        <taxon>Myxococcia</taxon>
        <taxon>Myxococcales</taxon>
        <taxon>Cystobacterineae</taxon>
        <taxon>Myxococcaceae</taxon>
        <taxon>Myxococcus</taxon>
    </lineage>
</organism>
<evidence type="ECO:0000255" key="1">
    <source>
        <dbReference type="HAMAP-Rule" id="MF_01454"/>
    </source>
</evidence>
<evidence type="ECO:0000255" key="2">
    <source>
        <dbReference type="PROSITE-ProRule" id="PRU01231"/>
    </source>
</evidence>
<evidence type="ECO:0000256" key="3">
    <source>
        <dbReference type="SAM" id="MobiDB-lite"/>
    </source>
</evidence>
<feature type="chain" id="PRO_0000386078" description="GTPase Obg">
    <location>
        <begin position="1"/>
        <end position="485"/>
    </location>
</feature>
<feature type="domain" description="Obg" evidence="2">
    <location>
        <begin position="1"/>
        <end position="159"/>
    </location>
</feature>
<feature type="domain" description="OBG-type G" evidence="1">
    <location>
        <begin position="160"/>
        <end position="332"/>
    </location>
</feature>
<feature type="region of interest" description="Disordered" evidence="3">
    <location>
        <begin position="367"/>
        <end position="485"/>
    </location>
</feature>
<feature type="compositionally biased region" description="Low complexity" evidence="3">
    <location>
        <begin position="367"/>
        <end position="385"/>
    </location>
</feature>
<feature type="compositionally biased region" description="Low complexity" evidence="3">
    <location>
        <begin position="394"/>
        <end position="428"/>
    </location>
</feature>
<feature type="compositionally biased region" description="Low complexity" evidence="3">
    <location>
        <begin position="437"/>
        <end position="446"/>
    </location>
</feature>
<feature type="compositionally biased region" description="Low complexity" evidence="3">
    <location>
        <begin position="455"/>
        <end position="474"/>
    </location>
</feature>
<feature type="binding site" evidence="1">
    <location>
        <begin position="166"/>
        <end position="173"/>
    </location>
    <ligand>
        <name>GTP</name>
        <dbReference type="ChEBI" id="CHEBI:37565"/>
    </ligand>
</feature>
<feature type="binding site" evidence="1">
    <location>
        <position position="173"/>
    </location>
    <ligand>
        <name>Mg(2+)</name>
        <dbReference type="ChEBI" id="CHEBI:18420"/>
    </ligand>
</feature>
<feature type="binding site" evidence="1">
    <location>
        <begin position="191"/>
        <end position="195"/>
    </location>
    <ligand>
        <name>GTP</name>
        <dbReference type="ChEBI" id="CHEBI:37565"/>
    </ligand>
</feature>
<feature type="binding site" evidence="1">
    <location>
        <position position="193"/>
    </location>
    <ligand>
        <name>Mg(2+)</name>
        <dbReference type="ChEBI" id="CHEBI:18420"/>
    </ligand>
</feature>
<feature type="binding site" evidence="1">
    <location>
        <begin position="213"/>
        <end position="216"/>
    </location>
    <ligand>
        <name>GTP</name>
        <dbReference type="ChEBI" id="CHEBI:37565"/>
    </ligand>
</feature>
<feature type="binding site" evidence="1">
    <location>
        <begin position="284"/>
        <end position="287"/>
    </location>
    <ligand>
        <name>GTP</name>
        <dbReference type="ChEBI" id="CHEBI:37565"/>
    </ligand>
</feature>
<feature type="binding site" evidence="1">
    <location>
        <begin position="313"/>
        <end position="315"/>
    </location>
    <ligand>
        <name>GTP</name>
        <dbReference type="ChEBI" id="CHEBI:37565"/>
    </ligand>
</feature>
<dbReference type="EC" id="3.6.5.-" evidence="1"/>
<dbReference type="EMBL" id="CP000113">
    <property type="protein sequence ID" value="ABF88413.1"/>
    <property type="molecule type" value="Genomic_DNA"/>
</dbReference>
<dbReference type="RefSeq" id="WP_011551587.1">
    <property type="nucleotide sequence ID" value="NC_008095.1"/>
</dbReference>
<dbReference type="SMR" id="Q1DC95"/>
<dbReference type="STRING" id="246197.MXAN_1471"/>
<dbReference type="EnsemblBacteria" id="ABF88413">
    <property type="protein sequence ID" value="ABF88413"/>
    <property type="gene ID" value="MXAN_1471"/>
</dbReference>
<dbReference type="GeneID" id="41358917"/>
<dbReference type="KEGG" id="mxa:MXAN_1471"/>
<dbReference type="eggNOG" id="COG0536">
    <property type="taxonomic scope" value="Bacteria"/>
</dbReference>
<dbReference type="HOGENOM" id="CLU_011747_2_0_7"/>
<dbReference type="OrthoDB" id="9807318at2"/>
<dbReference type="Proteomes" id="UP000002402">
    <property type="component" value="Chromosome"/>
</dbReference>
<dbReference type="GO" id="GO:0005737">
    <property type="term" value="C:cytoplasm"/>
    <property type="evidence" value="ECO:0007669"/>
    <property type="project" value="UniProtKB-SubCell"/>
</dbReference>
<dbReference type="GO" id="GO:0005525">
    <property type="term" value="F:GTP binding"/>
    <property type="evidence" value="ECO:0007669"/>
    <property type="project" value="UniProtKB-UniRule"/>
</dbReference>
<dbReference type="GO" id="GO:0003924">
    <property type="term" value="F:GTPase activity"/>
    <property type="evidence" value="ECO:0007669"/>
    <property type="project" value="UniProtKB-UniRule"/>
</dbReference>
<dbReference type="GO" id="GO:0000287">
    <property type="term" value="F:magnesium ion binding"/>
    <property type="evidence" value="ECO:0007669"/>
    <property type="project" value="InterPro"/>
</dbReference>
<dbReference type="GO" id="GO:0042254">
    <property type="term" value="P:ribosome biogenesis"/>
    <property type="evidence" value="ECO:0007669"/>
    <property type="project" value="UniProtKB-UniRule"/>
</dbReference>
<dbReference type="CDD" id="cd01898">
    <property type="entry name" value="Obg"/>
    <property type="match status" value="1"/>
</dbReference>
<dbReference type="FunFam" id="2.70.210.12:FF:000001">
    <property type="entry name" value="GTPase Obg"/>
    <property type="match status" value="1"/>
</dbReference>
<dbReference type="Gene3D" id="2.70.210.12">
    <property type="entry name" value="GTP1/OBG domain"/>
    <property type="match status" value="1"/>
</dbReference>
<dbReference type="Gene3D" id="3.40.50.300">
    <property type="entry name" value="P-loop containing nucleotide triphosphate hydrolases"/>
    <property type="match status" value="1"/>
</dbReference>
<dbReference type="HAMAP" id="MF_01454">
    <property type="entry name" value="GTPase_Obg"/>
    <property type="match status" value="1"/>
</dbReference>
<dbReference type="InterPro" id="IPR031167">
    <property type="entry name" value="G_OBG"/>
</dbReference>
<dbReference type="InterPro" id="IPR006073">
    <property type="entry name" value="GTP-bd"/>
</dbReference>
<dbReference type="InterPro" id="IPR014100">
    <property type="entry name" value="GTP-bd_Obg/CgtA"/>
</dbReference>
<dbReference type="InterPro" id="IPR006074">
    <property type="entry name" value="GTP1-OBG_CS"/>
</dbReference>
<dbReference type="InterPro" id="IPR006169">
    <property type="entry name" value="GTP1_OBG_dom"/>
</dbReference>
<dbReference type="InterPro" id="IPR036726">
    <property type="entry name" value="GTP1_OBG_dom_sf"/>
</dbReference>
<dbReference type="InterPro" id="IPR045086">
    <property type="entry name" value="OBG_GTPase"/>
</dbReference>
<dbReference type="InterPro" id="IPR027417">
    <property type="entry name" value="P-loop_NTPase"/>
</dbReference>
<dbReference type="NCBIfam" id="TIGR02729">
    <property type="entry name" value="Obg_CgtA"/>
    <property type="match status" value="1"/>
</dbReference>
<dbReference type="NCBIfam" id="NF008954">
    <property type="entry name" value="PRK12296.1"/>
    <property type="match status" value="1"/>
</dbReference>
<dbReference type="NCBIfam" id="NF008955">
    <property type="entry name" value="PRK12297.1"/>
    <property type="match status" value="1"/>
</dbReference>
<dbReference type="NCBIfam" id="NF008956">
    <property type="entry name" value="PRK12299.1"/>
    <property type="match status" value="1"/>
</dbReference>
<dbReference type="PANTHER" id="PTHR11702">
    <property type="entry name" value="DEVELOPMENTALLY REGULATED GTP-BINDING PROTEIN-RELATED"/>
    <property type="match status" value="1"/>
</dbReference>
<dbReference type="PANTHER" id="PTHR11702:SF31">
    <property type="entry name" value="MITOCHONDRIAL RIBOSOME-ASSOCIATED GTPASE 2"/>
    <property type="match status" value="1"/>
</dbReference>
<dbReference type="Pfam" id="PF01018">
    <property type="entry name" value="GTP1_OBG"/>
    <property type="match status" value="1"/>
</dbReference>
<dbReference type="Pfam" id="PF01926">
    <property type="entry name" value="MMR_HSR1"/>
    <property type="match status" value="1"/>
</dbReference>
<dbReference type="PRINTS" id="PR00326">
    <property type="entry name" value="GTP1OBG"/>
</dbReference>
<dbReference type="SUPFAM" id="SSF82051">
    <property type="entry name" value="Obg GTP-binding protein N-terminal domain"/>
    <property type="match status" value="1"/>
</dbReference>
<dbReference type="SUPFAM" id="SSF52540">
    <property type="entry name" value="P-loop containing nucleoside triphosphate hydrolases"/>
    <property type="match status" value="1"/>
</dbReference>
<dbReference type="PROSITE" id="PS51710">
    <property type="entry name" value="G_OBG"/>
    <property type="match status" value="1"/>
</dbReference>
<dbReference type="PROSITE" id="PS00905">
    <property type="entry name" value="GTP1_OBG"/>
    <property type="match status" value="1"/>
</dbReference>
<dbReference type="PROSITE" id="PS51883">
    <property type="entry name" value="OBG"/>
    <property type="match status" value="1"/>
</dbReference>
<sequence>MKFVDEVRIFVKAGDGGNGAVSFRREKYIERGGPNGGDGGNGGSVVFVADPQLTTLLDYRYQQHHRARNGEHGMGSDCNGRAAEDMVLKVPVGTLVKDANTGELLVDLSEAGQRWVAAKGGRGGLGNMNFATSTRQTPRFAQDGTKGEELTLRLELKLLADVGLLGFPNAGKSTFISRVSRARPKVADYPFTTLVPNLGMVQYKDGLSFVMADIPGIIEGASEGVGLGHQFLRHVERCKVLIHLIDMGAEGEGRAPLHDFDVLNAELGKYSPELASKPQVVAANKLDLPDAQARLEGFTEALRERGIRVYPVSCATGEGMQPLMDSVAEVLFTGRTEKLHVEIPAKAARAGKAKTKAAEKKALARNAGAAAATKSATKKSAAAKKAVTKKAPARKAGAVAKTSAARKAGTAAAKKAPARKSGTAPVKKAAAKKAPARKSGTAPAKKSAVKKASARKSGSSGKAAAKKASAATKRAPARKSGGGRS</sequence>
<reference key="1">
    <citation type="journal article" date="2006" name="Proc. Natl. Acad. Sci. U.S.A.">
        <title>Evolution of sensory complexity recorded in a myxobacterial genome.</title>
        <authorList>
            <person name="Goldman B.S."/>
            <person name="Nierman W.C."/>
            <person name="Kaiser D."/>
            <person name="Slater S.C."/>
            <person name="Durkin A.S."/>
            <person name="Eisen J.A."/>
            <person name="Ronning C.M."/>
            <person name="Barbazuk W.B."/>
            <person name="Blanchard M."/>
            <person name="Field C."/>
            <person name="Halling C."/>
            <person name="Hinkle G."/>
            <person name="Iartchuk O."/>
            <person name="Kim H.S."/>
            <person name="Mackenzie C."/>
            <person name="Madupu R."/>
            <person name="Miller N."/>
            <person name="Shvartsbeyn A."/>
            <person name="Sullivan S.A."/>
            <person name="Vaudin M."/>
            <person name="Wiegand R."/>
            <person name="Kaplan H.B."/>
        </authorList>
    </citation>
    <scope>NUCLEOTIDE SEQUENCE [LARGE SCALE GENOMIC DNA]</scope>
    <source>
        <strain>DK1622</strain>
    </source>
</reference>